<gene>
    <name type="ordered locus">Dhaf_3562</name>
</gene>
<reference key="1">
    <citation type="journal article" date="2012" name="BMC Microbiol.">
        <title>Genome sequence of Desulfitobacterium hafniense DCB-2, a Gram-positive anaerobe capable of dehalogenation and metal reduction.</title>
        <authorList>
            <person name="Kim S.H."/>
            <person name="Harzman C."/>
            <person name="Davis J.K."/>
            <person name="Hutcheson R."/>
            <person name="Broderick J.B."/>
            <person name="Marsh T.L."/>
            <person name="Tiedje J.M."/>
        </authorList>
    </citation>
    <scope>NUCLEOTIDE SEQUENCE [LARGE SCALE GENOMIC DNA]</scope>
    <source>
        <strain>DSM 10664 / DCB-2</strain>
    </source>
</reference>
<organism>
    <name type="scientific">Desulfitobacterium hafniense (strain DSM 10664 / DCB-2)</name>
    <dbReference type="NCBI Taxonomy" id="272564"/>
    <lineage>
        <taxon>Bacteria</taxon>
        <taxon>Bacillati</taxon>
        <taxon>Bacillota</taxon>
        <taxon>Clostridia</taxon>
        <taxon>Eubacteriales</taxon>
        <taxon>Desulfitobacteriaceae</taxon>
        <taxon>Desulfitobacterium</taxon>
    </lineage>
</organism>
<comment type="function">
    <text evidence="1">Could be a nuclease involved in processing of the 5'-end of pre-16S rRNA.</text>
</comment>
<comment type="subcellular location">
    <subcellularLocation>
        <location evidence="1">Cytoplasm</location>
    </subcellularLocation>
</comment>
<comment type="similarity">
    <text evidence="1">Belongs to the YqgF nuclease family.</text>
</comment>
<keyword id="KW-0963">Cytoplasm</keyword>
<keyword id="KW-0378">Hydrolase</keyword>
<keyword id="KW-0540">Nuclease</keyword>
<keyword id="KW-0690">Ribosome biogenesis</keyword>
<dbReference type="EC" id="3.1.-.-" evidence="1"/>
<dbReference type="EMBL" id="CP001336">
    <property type="protein sequence ID" value="ACL21580.1"/>
    <property type="molecule type" value="Genomic_DNA"/>
</dbReference>
<dbReference type="SMR" id="B8FQB9"/>
<dbReference type="KEGG" id="dhd:Dhaf_3562"/>
<dbReference type="HOGENOM" id="CLU_098240_2_0_9"/>
<dbReference type="Proteomes" id="UP000007726">
    <property type="component" value="Chromosome"/>
</dbReference>
<dbReference type="GO" id="GO:0005829">
    <property type="term" value="C:cytosol"/>
    <property type="evidence" value="ECO:0007669"/>
    <property type="project" value="TreeGrafter"/>
</dbReference>
<dbReference type="GO" id="GO:0004518">
    <property type="term" value="F:nuclease activity"/>
    <property type="evidence" value="ECO:0007669"/>
    <property type="project" value="UniProtKB-KW"/>
</dbReference>
<dbReference type="GO" id="GO:0000967">
    <property type="term" value="P:rRNA 5'-end processing"/>
    <property type="evidence" value="ECO:0007669"/>
    <property type="project" value="UniProtKB-UniRule"/>
</dbReference>
<dbReference type="CDD" id="cd16964">
    <property type="entry name" value="YqgF"/>
    <property type="match status" value="1"/>
</dbReference>
<dbReference type="Gene3D" id="3.30.420.140">
    <property type="entry name" value="YqgF/RNase H-like domain"/>
    <property type="match status" value="1"/>
</dbReference>
<dbReference type="HAMAP" id="MF_00651">
    <property type="entry name" value="Nuclease_YqgF"/>
    <property type="match status" value="1"/>
</dbReference>
<dbReference type="InterPro" id="IPR012337">
    <property type="entry name" value="RNaseH-like_sf"/>
</dbReference>
<dbReference type="InterPro" id="IPR005227">
    <property type="entry name" value="YqgF"/>
</dbReference>
<dbReference type="InterPro" id="IPR006641">
    <property type="entry name" value="YqgF/RNaseH-like_dom"/>
</dbReference>
<dbReference type="InterPro" id="IPR037027">
    <property type="entry name" value="YqgF/RNaseH-like_dom_sf"/>
</dbReference>
<dbReference type="NCBIfam" id="TIGR00250">
    <property type="entry name" value="RNAse_H_YqgF"/>
    <property type="match status" value="1"/>
</dbReference>
<dbReference type="PANTHER" id="PTHR33317">
    <property type="entry name" value="POLYNUCLEOTIDYL TRANSFERASE, RIBONUCLEASE H-LIKE SUPERFAMILY PROTEIN"/>
    <property type="match status" value="1"/>
</dbReference>
<dbReference type="PANTHER" id="PTHR33317:SF4">
    <property type="entry name" value="POLYNUCLEOTIDYL TRANSFERASE, RIBONUCLEASE H-LIKE SUPERFAMILY PROTEIN"/>
    <property type="match status" value="1"/>
</dbReference>
<dbReference type="Pfam" id="PF03652">
    <property type="entry name" value="RuvX"/>
    <property type="match status" value="1"/>
</dbReference>
<dbReference type="SMART" id="SM00732">
    <property type="entry name" value="YqgFc"/>
    <property type="match status" value="1"/>
</dbReference>
<dbReference type="SUPFAM" id="SSF53098">
    <property type="entry name" value="Ribonuclease H-like"/>
    <property type="match status" value="1"/>
</dbReference>
<proteinExistence type="inferred from homology"/>
<name>YQGF_DESHD</name>
<accession>B8FQB9</accession>
<protein>
    <recommendedName>
        <fullName evidence="1">Putative pre-16S rRNA nuclease</fullName>
        <ecNumber evidence="1">3.1.-.-</ecNumber>
    </recommendedName>
</protein>
<sequence>MRIMGLDFGERTIGVAVSDAMLLTAQGVKTIRRSPKELEELKTMLQDYEVDHIVLGYPKNMNGTLGPRAQATEEFAQILKEEFGLPVTLWDERLSTMGAQRSLLEADVSRAKRKQVIDKMAAVFILQGYLDYIRQKNGQNKE</sequence>
<evidence type="ECO:0000255" key="1">
    <source>
        <dbReference type="HAMAP-Rule" id="MF_00651"/>
    </source>
</evidence>
<feature type="chain" id="PRO_1000147478" description="Putative pre-16S rRNA nuclease">
    <location>
        <begin position="1"/>
        <end position="142"/>
    </location>
</feature>